<accession>Q9C2B9</accession>
<accession>Q7RVV8</accession>
<protein>
    <recommendedName>
        <fullName evidence="2">Large ribosomal subunit protein eL38</fullName>
    </recommendedName>
    <alternativeName>
        <fullName>60S ribosomal protein L38</fullName>
    </alternativeName>
</protein>
<proteinExistence type="evidence at protein level"/>
<gene>
    <name type="primary">rpl-38</name>
    <name type="ORF">B11N2.90</name>
    <name type="ORF">NCU03635</name>
</gene>
<sequence length="80" mass="9149">MPQEIGDIKKFIEICRRKDASAARIKKNKATQQIKFKVRCQKYLYTLVLKDSDKAEKLKASLPPSLTIADVAKRNKKQTA</sequence>
<comment type="function">
    <text evidence="4">Component of the ribosome, a large ribonucleoprotein complex responsible for the synthesis of proteins in the cell. The small ribosomal subunit (SSU) binds messenger RNAs (mRNAs) and translates the encoded message by selecting cognate aminoacyl-transfer RNA (tRNA) molecules. The large subunit (LSU) contains the ribosomal catalytic site termed the peptidyl transferase center (PTC), which catalyzes the formation of peptide bonds, thereby polymerizing the amino acids delivered by tRNAs into a polypeptide chain. The nascent polypeptides leave the ribosome through a tunnel in the LSU and interact with protein factors that function in enzymatic processing, targeting, and the membrane insertion of nascent chains at the exit of the ribosomal tunnel.</text>
</comment>
<comment type="subunit">
    <text evidence="1">Component of the large ribosomal subunit (LSU). Mature N.crassa ribosomes consist of a small (40S) and a large (60S) subunit. The 40S small subunit contains 1 molecule of ribosomal RNA (18S rRNA) and at least 32 different proteins. The large 60S subunit contains 3 rRNA molecules (26S, 5.8S and 5S rRNA) and at least 42 different proteins.</text>
</comment>
<comment type="subcellular location">
    <subcellularLocation>
        <location evidence="1">Cytoplasm</location>
    </subcellularLocation>
</comment>
<comment type="similarity">
    <text evidence="3">Belongs to the eukaryotic ribosomal protein eL38 family.</text>
</comment>
<dbReference type="EMBL" id="AL513444">
    <property type="protein sequence ID" value="CAC28690.1"/>
    <property type="molecule type" value="Genomic_DNA"/>
</dbReference>
<dbReference type="EMBL" id="CM002240">
    <property type="protein sequence ID" value="EAA32126.1"/>
    <property type="molecule type" value="Genomic_DNA"/>
</dbReference>
<dbReference type="RefSeq" id="XP_961362.1">
    <property type="nucleotide sequence ID" value="XM_956269.3"/>
</dbReference>
<dbReference type="PDB" id="7R81">
    <property type="method" value="EM"/>
    <property type="resolution" value="2.70 A"/>
    <property type="chains" value="m1=1-80"/>
</dbReference>
<dbReference type="PDBsum" id="7R81"/>
<dbReference type="EMDB" id="EMD-24307"/>
<dbReference type="SMR" id="Q9C2B9"/>
<dbReference type="FunCoup" id="Q9C2B9">
    <property type="interactions" value="835"/>
</dbReference>
<dbReference type="STRING" id="367110.Q9C2B9"/>
<dbReference type="PaxDb" id="5141-EFNCRP00000003420"/>
<dbReference type="EnsemblFungi" id="EAA32126">
    <property type="protein sequence ID" value="EAA32126"/>
    <property type="gene ID" value="NCU03635"/>
</dbReference>
<dbReference type="GeneID" id="3877494"/>
<dbReference type="KEGG" id="ncr:NCU03635"/>
<dbReference type="VEuPathDB" id="FungiDB:NCU03635"/>
<dbReference type="HOGENOM" id="CLU_152057_1_0_1"/>
<dbReference type="InParanoid" id="Q9C2B9"/>
<dbReference type="OMA" id="RCHRFIY"/>
<dbReference type="OrthoDB" id="10250488at2759"/>
<dbReference type="Proteomes" id="UP000001805">
    <property type="component" value="Chromosome 2, Linkage Group V"/>
</dbReference>
<dbReference type="GO" id="GO:0022625">
    <property type="term" value="C:cytosolic large ribosomal subunit"/>
    <property type="evidence" value="ECO:0000318"/>
    <property type="project" value="GO_Central"/>
</dbReference>
<dbReference type="GO" id="GO:0003735">
    <property type="term" value="F:structural constituent of ribosome"/>
    <property type="evidence" value="ECO:0000318"/>
    <property type="project" value="GO_Central"/>
</dbReference>
<dbReference type="GO" id="GO:0022618">
    <property type="term" value="P:protein-RNA complex assembly"/>
    <property type="evidence" value="ECO:0000318"/>
    <property type="project" value="GO_Central"/>
</dbReference>
<dbReference type="GO" id="GO:0006412">
    <property type="term" value="P:translation"/>
    <property type="evidence" value="ECO:0007669"/>
    <property type="project" value="InterPro"/>
</dbReference>
<dbReference type="FunFam" id="3.30.720.90:FF:000001">
    <property type="entry name" value="60S ribosomal protein L38"/>
    <property type="match status" value="1"/>
</dbReference>
<dbReference type="Gene3D" id="3.30.720.90">
    <property type="match status" value="1"/>
</dbReference>
<dbReference type="InterPro" id="IPR002675">
    <property type="entry name" value="Ribosomal_eL38"/>
</dbReference>
<dbReference type="InterPro" id="IPR038464">
    <property type="entry name" value="Ribosomal_eL38_sf"/>
</dbReference>
<dbReference type="PANTHER" id="PTHR10965">
    <property type="entry name" value="60S RIBOSOMAL PROTEIN L38"/>
    <property type="match status" value="1"/>
</dbReference>
<dbReference type="PANTHER" id="PTHR10965:SF0">
    <property type="entry name" value="LARGE RIBOSOMAL SUBUNIT PROTEIN EL38"/>
    <property type="match status" value="1"/>
</dbReference>
<dbReference type="Pfam" id="PF01781">
    <property type="entry name" value="Ribosomal_L38e"/>
    <property type="match status" value="1"/>
</dbReference>
<organism>
    <name type="scientific">Neurospora crassa (strain ATCC 24698 / 74-OR23-1A / CBS 708.71 / DSM 1257 / FGSC 987)</name>
    <dbReference type="NCBI Taxonomy" id="367110"/>
    <lineage>
        <taxon>Eukaryota</taxon>
        <taxon>Fungi</taxon>
        <taxon>Dikarya</taxon>
        <taxon>Ascomycota</taxon>
        <taxon>Pezizomycotina</taxon>
        <taxon>Sordariomycetes</taxon>
        <taxon>Sordariomycetidae</taxon>
        <taxon>Sordariales</taxon>
        <taxon>Sordariaceae</taxon>
        <taxon>Neurospora</taxon>
    </lineage>
</organism>
<evidence type="ECO:0000269" key="1">
    <source>
    </source>
</evidence>
<evidence type="ECO:0000303" key="2">
    <source>
    </source>
</evidence>
<evidence type="ECO:0000305" key="3"/>
<evidence type="ECO:0000305" key="4">
    <source>
    </source>
</evidence>
<evidence type="ECO:0007744" key="5">
    <source>
        <dbReference type="PDB" id="7R81"/>
    </source>
</evidence>
<keyword id="KW-0002">3D-structure</keyword>
<keyword id="KW-0963">Cytoplasm</keyword>
<keyword id="KW-1185">Reference proteome</keyword>
<keyword id="KW-0687">Ribonucleoprotein</keyword>
<keyword id="KW-0689">Ribosomal protein</keyword>
<name>RL38_NEUCR</name>
<feature type="chain" id="PRO_0000215442" description="Large ribosomal subunit protein eL38">
    <location>
        <begin position="1"/>
        <end position="80"/>
    </location>
</feature>
<reference key="1">
    <citation type="journal article" date="2003" name="Nucleic Acids Res.">
        <title>What's in the genome of a filamentous fungus? Analysis of the Neurospora genome sequence.</title>
        <authorList>
            <person name="Mannhaupt G."/>
            <person name="Montrone C."/>
            <person name="Haase D."/>
            <person name="Mewes H.-W."/>
            <person name="Aign V."/>
            <person name="Hoheisel J.D."/>
            <person name="Fartmann B."/>
            <person name="Nyakatura G."/>
            <person name="Kempken F."/>
            <person name="Maier J."/>
            <person name="Schulte U."/>
        </authorList>
    </citation>
    <scope>NUCLEOTIDE SEQUENCE [LARGE SCALE GENOMIC DNA]</scope>
    <source>
        <strain>ATCC 24698 / 74-OR23-1A / CBS 708.71 / DSM 1257 / FGSC 987</strain>
    </source>
</reference>
<reference key="2">
    <citation type="journal article" date="2003" name="Nature">
        <title>The genome sequence of the filamentous fungus Neurospora crassa.</title>
        <authorList>
            <person name="Galagan J.E."/>
            <person name="Calvo S.E."/>
            <person name="Borkovich K.A."/>
            <person name="Selker E.U."/>
            <person name="Read N.D."/>
            <person name="Jaffe D.B."/>
            <person name="FitzHugh W."/>
            <person name="Ma L.-J."/>
            <person name="Smirnov S."/>
            <person name="Purcell S."/>
            <person name="Rehman B."/>
            <person name="Elkins T."/>
            <person name="Engels R."/>
            <person name="Wang S."/>
            <person name="Nielsen C.B."/>
            <person name="Butler J."/>
            <person name="Endrizzi M."/>
            <person name="Qui D."/>
            <person name="Ianakiev P."/>
            <person name="Bell-Pedersen D."/>
            <person name="Nelson M.A."/>
            <person name="Werner-Washburne M."/>
            <person name="Selitrennikoff C.P."/>
            <person name="Kinsey J.A."/>
            <person name="Braun E.L."/>
            <person name="Zelter A."/>
            <person name="Schulte U."/>
            <person name="Kothe G.O."/>
            <person name="Jedd G."/>
            <person name="Mewes H.-W."/>
            <person name="Staben C."/>
            <person name="Marcotte E."/>
            <person name="Greenberg D."/>
            <person name="Roy A."/>
            <person name="Foley K."/>
            <person name="Naylor J."/>
            <person name="Stange-Thomann N."/>
            <person name="Barrett R."/>
            <person name="Gnerre S."/>
            <person name="Kamal M."/>
            <person name="Kamvysselis M."/>
            <person name="Mauceli E.W."/>
            <person name="Bielke C."/>
            <person name="Rudd S."/>
            <person name="Frishman D."/>
            <person name="Krystofova S."/>
            <person name="Rasmussen C."/>
            <person name="Metzenberg R.L."/>
            <person name="Perkins D.D."/>
            <person name="Kroken S."/>
            <person name="Cogoni C."/>
            <person name="Macino G."/>
            <person name="Catcheside D.E.A."/>
            <person name="Li W."/>
            <person name="Pratt R.J."/>
            <person name="Osmani S.A."/>
            <person name="DeSouza C.P.C."/>
            <person name="Glass N.L."/>
            <person name="Orbach M.J."/>
            <person name="Berglund J.A."/>
            <person name="Voelker R."/>
            <person name="Yarden O."/>
            <person name="Plamann M."/>
            <person name="Seiler S."/>
            <person name="Dunlap J.C."/>
            <person name="Radford A."/>
            <person name="Aramayo R."/>
            <person name="Natvig D.O."/>
            <person name="Alex L.A."/>
            <person name="Mannhaupt G."/>
            <person name="Ebbole D.J."/>
            <person name="Freitag M."/>
            <person name="Paulsen I."/>
            <person name="Sachs M.S."/>
            <person name="Lander E.S."/>
            <person name="Nusbaum C."/>
            <person name="Birren B.W."/>
        </authorList>
    </citation>
    <scope>NUCLEOTIDE SEQUENCE [LARGE SCALE GENOMIC DNA]</scope>
    <source>
        <strain>ATCC 24698 / 74-OR23-1A / CBS 708.71 / DSM 1257 / FGSC 987</strain>
    </source>
</reference>
<reference evidence="5" key="3">
    <citation type="journal article" date="2021" name="Proc. Natl. Acad. Sci. U.S.A.">
        <title>Structure of the translating Neurospora ribosome arrested by cycloheximide.</title>
        <authorList>
            <person name="Shen L."/>
            <person name="Su Z."/>
            <person name="Yang K."/>
            <person name="Wu C."/>
            <person name="Becker T."/>
            <person name="Bell-Pedersen D."/>
            <person name="Zhang J."/>
            <person name="Sachs M.S."/>
        </authorList>
    </citation>
    <scope>STRUCTURE BY ELECTRON MICROSCOPY (2.70 ANGSTROMS)</scope>
</reference>